<accession>Q5SI29</accession>
<name>LUXS_THET8</name>
<reference key="1">
    <citation type="submission" date="2004-11" db="EMBL/GenBank/DDBJ databases">
        <title>Complete genome sequence of Thermus thermophilus HB8.</title>
        <authorList>
            <person name="Masui R."/>
            <person name="Kurokawa K."/>
            <person name="Nakagawa N."/>
            <person name="Tokunaga F."/>
            <person name="Koyama Y."/>
            <person name="Shibata T."/>
            <person name="Oshima T."/>
            <person name="Yokoyama S."/>
            <person name="Yasunaga T."/>
            <person name="Kuramitsu S."/>
        </authorList>
    </citation>
    <scope>NUCLEOTIDE SEQUENCE [LARGE SCALE GENOMIC DNA]</scope>
    <source>
        <strain>ATCC 27634 / DSM 579 / HB8</strain>
    </source>
</reference>
<organism>
    <name type="scientific">Thermus thermophilus (strain ATCC 27634 / DSM 579 / HB8)</name>
    <dbReference type="NCBI Taxonomy" id="300852"/>
    <lineage>
        <taxon>Bacteria</taxon>
        <taxon>Thermotogati</taxon>
        <taxon>Deinococcota</taxon>
        <taxon>Deinococci</taxon>
        <taxon>Thermales</taxon>
        <taxon>Thermaceae</taxon>
        <taxon>Thermus</taxon>
    </lineage>
</organism>
<evidence type="ECO:0000255" key="1">
    <source>
        <dbReference type="HAMAP-Rule" id="MF_00091"/>
    </source>
</evidence>
<proteinExistence type="inferred from homology"/>
<dbReference type="EC" id="4.4.1.21" evidence="1"/>
<dbReference type="EMBL" id="AP008226">
    <property type="protein sequence ID" value="BAD71374.1"/>
    <property type="molecule type" value="Genomic_DNA"/>
</dbReference>
<dbReference type="RefSeq" id="WP_011173597.1">
    <property type="nucleotide sequence ID" value="NC_006461.1"/>
</dbReference>
<dbReference type="RefSeq" id="YP_144817.1">
    <property type="nucleotide sequence ID" value="NC_006461.1"/>
</dbReference>
<dbReference type="SMR" id="Q5SI29"/>
<dbReference type="EnsemblBacteria" id="BAD71374">
    <property type="protein sequence ID" value="BAD71374"/>
    <property type="gene ID" value="BAD71374"/>
</dbReference>
<dbReference type="GeneID" id="3167928"/>
<dbReference type="KEGG" id="ttj:TTHA1551"/>
<dbReference type="PATRIC" id="fig|300852.9.peg.1522"/>
<dbReference type="eggNOG" id="COG1854">
    <property type="taxonomic scope" value="Bacteria"/>
</dbReference>
<dbReference type="HOGENOM" id="CLU_107531_2_0_0"/>
<dbReference type="PhylomeDB" id="Q5SI29"/>
<dbReference type="Proteomes" id="UP000000532">
    <property type="component" value="Chromosome"/>
</dbReference>
<dbReference type="GO" id="GO:0005506">
    <property type="term" value="F:iron ion binding"/>
    <property type="evidence" value="ECO:0007669"/>
    <property type="project" value="InterPro"/>
</dbReference>
<dbReference type="GO" id="GO:0043768">
    <property type="term" value="F:S-ribosylhomocysteine lyase activity"/>
    <property type="evidence" value="ECO:0007669"/>
    <property type="project" value="UniProtKB-UniRule"/>
</dbReference>
<dbReference type="GO" id="GO:0009372">
    <property type="term" value="P:quorum sensing"/>
    <property type="evidence" value="ECO:0007669"/>
    <property type="project" value="UniProtKB-UniRule"/>
</dbReference>
<dbReference type="Gene3D" id="3.30.1360.80">
    <property type="entry name" value="S-ribosylhomocysteinase (LuxS)"/>
    <property type="match status" value="1"/>
</dbReference>
<dbReference type="HAMAP" id="MF_00091">
    <property type="entry name" value="LuxS"/>
    <property type="match status" value="1"/>
</dbReference>
<dbReference type="InterPro" id="IPR037005">
    <property type="entry name" value="LuxS_sf"/>
</dbReference>
<dbReference type="InterPro" id="IPR011249">
    <property type="entry name" value="Metalloenz_LuxS/M16"/>
</dbReference>
<dbReference type="InterPro" id="IPR003815">
    <property type="entry name" value="S-ribosylhomocysteinase"/>
</dbReference>
<dbReference type="NCBIfam" id="NF002604">
    <property type="entry name" value="PRK02260.1-4"/>
    <property type="match status" value="1"/>
</dbReference>
<dbReference type="NCBIfam" id="NF002606">
    <property type="entry name" value="PRK02260.2-4"/>
    <property type="match status" value="1"/>
</dbReference>
<dbReference type="PANTHER" id="PTHR35799">
    <property type="entry name" value="S-RIBOSYLHOMOCYSTEINE LYASE"/>
    <property type="match status" value="1"/>
</dbReference>
<dbReference type="PANTHER" id="PTHR35799:SF1">
    <property type="entry name" value="S-RIBOSYLHOMOCYSTEINE LYASE"/>
    <property type="match status" value="1"/>
</dbReference>
<dbReference type="Pfam" id="PF02664">
    <property type="entry name" value="LuxS"/>
    <property type="match status" value="1"/>
</dbReference>
<dbReference type="PIRSF" id="PIRSF006160">
    <property type="entry name" value="AI2"/>
    <property type="match status" value="1"/>
</dbReference>
<dbReference type="PRINTS" id="PR01487">
    <property type="entry name" value="LUXSPROTEIN"/>
</dbReference>
<dbReference type="SUPFAM" id="SSF63411">
    <property type="entry name" value="LuxS/MPP-like metallohydrolase"/>
    <property type="match status" value="1"/>
</dbReference>
<sequence>MAEVESFSLDHTKVKAPYVRLAGRKALAGGVVEKYDLRLAQPNREALPTGALHTLEHLLAGYLRDHLPGVIDLSPMGCRTGFYLVVEGPVGEEKVLEAFAQALKDVLAHEGEVPGASFRECGNYRDHDLPGAKAWAEKVLKAGLRVQATVPLEAR</sequence>
<feature type="chain" id="PRO_0000298054" description="S-ribosylhomocysteine lyase">
    <location>
        <begin position="1"/>
        <end position="155"/>
    </location>
</feature>
<feature type="binding site" evidence="1">
    <location>
        <position position="53"/>
    </location>
    <ligand>
        <name>Fe cation</name>
        <dbReference type="ChEBI" id="CHEBI:24875"/>
    </ligand>
</feature>
<feature type="binding site" evidence="1">
    <location>
        <position position="57"/>
    </location>
    <ligand>
        <name>Fe cation</name>
        <dbReference type="ChEBI" id="CHEBI:24875"/>
    </ligand>
</feature>
<feature type="binding site" evidence="1">
    <location>
        <position position="121"/>
    </location>
    <ligand>
        <name>Fe cation</name>
        <dbReference type="ChEBI" id="CHEBI:24875"/>
    </ligand>
</feature>
<gene>
    <name evidence="1" type="primary">luxS</name>
    <name type="ordered locus">TTHA1551</name>
</gene>
<protein>
    <recommendedName>
        <fullName evidence="1">S-ribosylhomocysteine lyase</fullName>
        <ecNumber evidence="1">4.4.1.21</ecNumber>
    </recommendedName>
    <alternativeName>
        <fullName evidence="1">AI-2 synthesis protein</fullName>
    </alternativeName>
    <alternativeName>
        <fullName evidence="1">Autoinducer-2 production protein LuxS</fullName>
    </alternativeName>
</protein>
<keyword id="KW-0071">Autoinducer synthesis</keyword>
<keyword id="KW-0408">Iron</keyword>
<keyword id="KW-0456">Lyase</keyword>
<keyword id="KW-0479">Metal-binding</keyword>
<keyword id="KW-0673">Quorum sensing</keyword>
<keyword id="KW-1185">Reference proteome</keyword>
<comment type="function">
    <text evidence="1">Involved in the synthesis of autoinducer 2 (AI-2) which is secreted by bacteria and is used to communicate both the cell density and the metabolic potential of the environment. The regulation of gene expression in response to changes in cell density is called quorum sensing. Catalyzes the transformation of S-ribosylhomocysteine (RHC) to homocysteine (HC) and 4,5-dihydroxy-2,3-pentadione (DPD).</text>
</comment>
<comment type="catalytic activity">
    <reaction evidence="1">
        <text>S-(5-deoxy-D-ribos-5-yl)-L-homocysteine = (S)-4,5-dihydroxypentane-2,3-dione + L-homocysteine</text>
        <dbReference type="Rhea" id="RHEA:17753"/>
        <dbReference type="ChEBI" id="CHEBI:29484"/>
        <dbReference type="ChEBI" id="CHEBI:58195"/>
        <dbReference type="ChEBI" id="CHEBI:58199"/>
        <dbReference type="EC" id="4.4.1.21"/>
    </reaction>
</comment>
<comment type="cofactor">
    <cofactor evidence="1">
        <name>Fe cation</name>
        <dbReference type="ChEBI" id="CHEBI:24875"/>
    </cofactor>
    <text evidence="1">Binds 1 Fe cation per subunit.</text>
</comment>
<comment type="subunit">
    <text evidence="1">Homodimer.</text>
</comment>
<comment type="similarity">
    <text evidence="1">Belongs to the LuxS family.</text>
</comment>